<keyword id="KW-0002">3D-structure</keyword>
<keyword id="KW-0903">Direct protein sequencing</keyword>
<keyword id="KW-0521">NADP</keyword>
<keyword id="KW-0560">Oxidoreductase</keyword>
<keyword id="KW-1185">Reference proteome</keyword>
<proteinExistence type="evidence at protein level"/>
<gene>
    <name type="primary">sucD</name>
    <name type="ordered locus">CKL_3015</name>
</gene>
<accession>P38947</accession>
<accession>A5N1M7</accession>
<feature type="chain" id="PRO_0000072297" description="Succinate-semialdehyde dehydrogenase (acetylating)">
    <location>
        <begin position="1"/>
        <end position="453"/>
    </location>
</feature>
<feature type="active site" evidence="1">
    <location>
        <position position="242"/>
    </location>
</feature>
<feature type="binding site" evidence="1">
    <location>
        <begin position="188"/>
        <end position="193"/>
    </location>
    <ligand>
        <name>NADP(+)</name>
        <dbReference type="ChEBI" id="CHEBI:58349"/>
    </ligand>
</feature>
<feature type="sequence conflict" description="In Ref. 1; AAA92347." evidence="2" ref="1">
    <original>V</original>
    <variation>A</variation>
    <location>
        <position position="16"/>
    </location>
</feature>
<feature type="sequence conflict" description="In Ref. 1; AAA92347." evidence="2" ref="1">
    <original>A</original>
    <variation>ARTVLPISRLVVNQPATTAG</variation>
    <location>
        <position position="379"/>
    </location>
</feature>
<feature type="helix" evidence="4">
    <location>
        <begin position="7"/>
        <end position="21"/>
    </location>
</feature>
<feature type="helix" evidence="4">
    <location>
        <begin position="26"/>
        <end position="42"/>
    </location>
</feature>
<feature type="helix" evidence="4">
    <location>
        <begin position="44"/>
        <end position="55"/>
    </location>
</feature>
<feature type="helix" evidence="4">
    <location>
        <begin position="60"/>
        <end position="78"/>
    </location>
</feature>
<feature type="strand" evidence="4">
    <location>
        <begin position="84"/>
        <end position="90"/>
    </location>
</feature>
<feature type="helix" evidence="4">
    <location>
        <begin position="91"/>
        <end position="93"/>
    </location>
</feature>
<feature type="strand" evidence="4">
    <location>
        <begin position="95"/>
        <end position="101"/>
    </location>
</feature>
<feature type="strand" evidence="4">
    <location>
        <begin position="104"/>
        <end position="108"/>
    </location>
</feature>
<feature type="strand" evidence="4">
    <location>
        <begin position="111"/>
        <end position="113"/>
    </location>
</feature>
<feature type="helix" evidence="4">
    <location>
        <begin position="116"/>
        <end position="127"/>
    </location>
</feature>
<feature type="strand" evidence="4">
    <location>
        <begin position="131"/>
        <end position="135"/>
    </location>
</feature>
<feature type="helix" evidence="4">
    <location>
        <begin position="138"/>
        <end position="140"/>
    </location>
</feature>
<feature type="helix" evidence="4">
    <location>
        <begin position="141"/>
        <end position="157"/>
    </location>
</feature>
<feature type="strand" evidence="4">
    <location>
        <begin position="164"/>
        <end position="167"/>
    </location>
</feature>
<feature type="helix" evidence="4">
    <location>
        <begin position="173"/>
        <end position="182"/>
    </location>
</feature>
<feature type="strand" evidence="4">
    <location>
        <begin position="183"/>
        <end position="188"/>
    </location>
</feature>
<feature type="helix" evidence="4">
    <location>
        <begin position="192"/>
        <end position="198"/>
    </location>
</feature>
<feature type="strand" evidence="4">
    <location>
        <begin position="201"/>
        <end position="203"/>
    </location>
</feature>
<feature type="strand" evidence="4">
    <location>
        <begin position="205"/>
        <end position="207"/>
    </location>
</feature>
<feature type="strand" evidence="4">
    <location>
        <begin position="213"/>
        <end position="217"/>
    </location>
</feature>
<feature type="helix" evidence="4">
    <location>
        <begin position="223"/>
        <end position="234"/>
    </location>
</feature>
<feature type="helix" evidence="4">
    <location>
        <begin position="236"/>
        <end position="239"/>
    </location>
</feature>
<feature type="strand" evidence="4">
    <location>
        <begin position="247"/>
        <end position="251"/>
    </location>
</feature>
<feature type="helix" evidence="4">
    <location>
        <begin position="252"/>
        <end position="254"/>
    </location>
</feature>
<feature type="helix" evidence="4">
    <location>
        <begin position="255"/>
        <end position="264"/>
    </location>
</feature>
<feature type="strand" evidence="4">
    <location>
        <begin position="267"/>
        <end position="270"/>
    </location>
</feature>
<feature type="helix" evidence="4">
    <location>
        <begin position="273"/>
        <end position="283"/>
    </location>
</feature>
<feature type="strand" evidence="3">
    <location>
        <begin position="284"/>
        <end position="289"/>
    </location>
</feature>
<feature type="helix" evidence="4">
    <location>
        <begin position="291"/>
        <end position="293"/>
    </location>
</feature>
<feature type="helix" evidence="4">
    <location>
        <begin position="298"/>
        <end position="305"/>
    </location>
</feature>
<feature type="strand" evidence="4">
    <location>
        <begin position="315"/>
        <end position="319"/>
    </location>
</feature>
<feature type="strand" evidence="4">
    <location>
        <begin position="321"/>
        <end position="323"/>
    </location>
</feature>
<feature type="helix" evidence="4">
    <location>
        <begin position="324"/>
        <end position="326"/>
    </location>
</feature>
<feature type="helix" evidence="4">
    <location>
        <begin position="328"/>
        <end position="330"/>
    </location>
</feature>
<feature type="strand" evidence="4">
    <location>
        <begin position="335"/>
        <end position="345"/>
    </location>
</feature>
<feature type="helix" evidence="4">
    <location>
        <begin position="346"/>
        <end position="359"/>
    </location>
</feature>
<feature type="turn" evidence="4">
    <location>
        <begin position="360"/>
        <end position="363"/>
    </location>
</feature>
<feature type="strand" evidence="4">
    <location>
        <begin position="364"/>
        <end position="369"/>
    </location>
</feature>
<feature type="helix" evidence="4">
    <location>
        <begin position="373"/>
        <end position="382"/>
    </location>
</feature>
<feature type="strand" evidence="4">
    <location>
        <begin position="386"/>
        <end position="392"/>
    </location>
</feature>
<feature type="helix" evidence="4">
    <location>
        <begin position="394"/>
        <end position="398"/>
    </location>
</feature>
<feature type="turn" evidence="4">
    <location>
        <begin position="414"/>
        <end position="418"/>
    </location>
</feature>
<feature type="strand" evidence="4">
    <location>
        <begin position="422"/>
        <end position="424"/>
    </location>
</feature>
<feature type="helix" evidence="4">
    <location>
        <begin position="427"/>
        <end position="430"/>
    </location>
</feature>
<feature type="strand" evidence="4">
    <location>
        <begin position="431"/>
        <end position="435"/>
    </location>
</feature>
<feature type="helix" evidence="4">
    <location>
        <begin position="448"/>
        <end position="452"/>
    </location>
</feature>
<protein>
    <recommendedName>
        <fullName>Succinate-semialdehyde dehydrogenase (acetylating)</fullName>
        <ecNumber>1.2.1.76</ecNumber>
    </recommendedName>
</protein>
<evidence type="ECO:0000250" key="1"/>
<evidence type="ECO:0000305" key="2"/>
<evidence type="ECO:0007829" key="3">
    <source>
        <dbReference type="PDB" id="8CEI"/>
    </source>
</evidence>
<evidence type="ECO:0007829" key="4">
    <source>
        <dbReference type="PDB" id="8CEJ"/>
    </source>
</evidence>
<organism>
    <name type="scientific">Clostridium kluyveri (strain ATCC 8527 / DSM 555 / NBRC 12016 / NCIMB 10680 / K1)</name>
    <dbReference type="NCBI Taxonomy" id="431943"/>
    <lineage>
        <taxon>Bacteria</taxon>
        <taxon>Bacillati</taxon>
        <taxon>Bacillota</taxon>
        <taxon>Clostridia</taxon>
        <taxon>Eubacteriales</taxon>
        <taxon>Clostridiaceae</taxon>
        <taxon>Clostridium</taxon>
    </lineage>
</organism>
<reference key="1">
    <citation type="journal article" date="1996" name="J. Bacteriol.">
        <title>Molecular analysis of the anaerobic succinate degradation pathway in Clostridium kluyveri.</title>
        <authorList>
            <person name="Soehling B."/>
            <person name="Gottschalk G."/>
        </authorList>
    </citation>
    <scope>NUCLEOTIDE SEQUENCE [GENOMIC DNA]</scope>
    <scope>PROTEIN SEQUENCE OF 1-24</scope>
</reference>
<reference key="2">
    <citation type="journal article" date="2008" name="Proc. Natl. Acad. Sci. U.S.A.">
        <title>The genome of Clostridium kluyveri, a strict anaerobe with unique metabolic features.</title>
        <authorList>
            <person name="Seedorf H."/>
            <person name="Fricke W.F."/>
            <person name="Veith B."/>
            <person name="Brueggemann H."/>
            <person name="Liesegang H."/>
            <person name="Strittmatter A."/>
            <person name="Miethke M."/>
            <person name="Buckel W."/>
            <person name="Hinderberger J."/>
            <person name="Li F."/>
            <person name="Hagemeier C."/>
            <person name="Thauer R.K."/>
            <person name="Gottschalk G."/>
        </authorList>
    </citation>
    <scope>NUCLEOTIDE SEQUENCE [LARGE SCALE GENOMIC DNA]</scope>
    <source>
        <strain>ATCC 8527 / DSM 555 / NBRC 12016 / NCIMB 10680 / K1</strain>
    </source>
</reference>
<name>SUCD_CLOK5</name>
<sequence length="453" mass="48968">MSNEVSIKELIEKAKVAQKKLEAYSQEQVDVLVKALGKVVYDNAEMFAKEAVEETEMGVYEDKVAKCHLKSGAIWNHIKDKKTVGIIKEEPERALVYVAKPKGVVAATTPITNPVVTPMCNAMAAIKGRNTIIVAPHPKAKKVSAHTVELMNAELKKLGAPENIIQIVEAPSREAAKELMESADVVIATGGAGRVKAAYSSGRPAYGVGPGNSQVIVDKGYDYNKAAQDIITGRKYDNGIICSSEQSVIAPAEDYDKVIAAFVENGAFYVEDEETVEKFRSTLFKDGKINSKIIGKSVQIIADLAGVKVPEGTKVIVLKGKGAGEKDVLCKEKMCPVLVALKYDTFEEAVEIAMANYMYEGAGHTAGIHSDNDENIRYAGTVLPISRLVVNQPATTAGGSFNNGFNPTTTLGCGSWGRNSISENLTYEHLINVSRIGYFNKEAKVPSYEEIWG</sequence>
<comment type="function">
    <text>Catalyzes the reduction of succinate semialdehyde to succinyl-CoA. The enzyme is specific for succinate semialdehyde and succinyl-CoA, and only shows low activity with palmitoyl-CoA. There is no activity with NAD(+) as cosubstrate.</text>
</comment>
<comment type="catalytic activity">
    <reaction>
        <text>succinate semialdehyde + NADP(+) + CoA = succinyl-CoA + NADPH + H(+)</text>
        <dbReference type="Rhea" id="RHEA:26450"/>
        <dbReference type="ChEBI" id="CHEBI:15378"/>
        <dbReference type="ChEBI" id="CHEBI:57287"/>
        <dbReference type="ChEBI" id="CHEBI:57292"/>
        <dbReference type="ChEBI" id="CHEBI:57706"/>
        <dbReference type="ChEBI" id="CHEBI:57783"/>
        <dbReference type="ChEBI" id="CHEBI:58349"/>
        <dbReference type="EC" id="1.2.1.76"/>
    </reaction>
</comment>
<comment type="biophysicochemical properties">
    <kinetics>
        <KM>4.3 mM for NADPH</KM>
        <KM>3.2 mM for succinyl-CoA</KM>
        <KM>2.7 mM for succinate semialdehyde</KM>
        <KM>2.9 mM for CoA</KM>
        <KM>4 mM for NADP(+)</KM>
        <Vmax>28.9 umol/min/mg enzyme toward NADPH</Vmax>
        <Vmax>28.9 umol/min/mg enzyme toward succinyl-CoA</Vmax>
        <Vmax>28.3 umol/min/mg enzyme toward succinate semialdehyde</Vmax>
        <Vmax>27.3 umol/min/mg enzyme toward CoA</Vmax>
        <Vmax>31.2 umol/min/mg enzyme toward NADP(+)</Vmax>
    </kinetics>
    <phDependence>
        <text>Optimum pH is 7.0 for the reduction reaction and 8.5 for the oxidation reaction.</text>
    </phDependence>
</comment>
<comment type="subunit">
    <text>Homodimer.</text>
</comment>
<dbReference type="EC" id="1.2.1.76"/>
<dbReference type="EMBL" id="L21902">
    <property type="protein sequence ID" value="AAA92347.1"/>
    <property type="molecule type" value="Genomic_DNA"/>
</dbReference>
<dbReference type="EMBL" id="CP000673">
    <property type="protein sequence ID" value="EDK35023.1"/>
    <property type="molecule type" value="Genomic_DNA"/>
</dbReference>
<dbReference type="RefSeq" id="WP_012103358.1">
    <property type="nucleotide sequence ID" value="NC_009706.1"/>
</dbReference>
<dbReference type="PDB" id="8CEI">
    <property type="method" value="X-ray"/>
    <property type="resolution" value="2.20 A"/>
    <property type="chains" value="A/B/C/D=1-453"/>
</dbReference>
<dbReference type="PDB" id="8CEJ">
    <property type="method" value="X-ray"/>
    <property type="resolution" value="2.10 A"/>
    <property type="chains" value="A/B/C/D=1-453"/>
</dbReference>
<dbReference type="PDB" id="8CEK">
    <property type="method" value="X-ray"/>
    <property type="resolution" value="2.15 A"/>
    <property type="chains" value="A/B/C/D=1-453"/>
</dbReference>
<dbReference type="PDBsum" id="8CEI"/>
<dbReference type="PDBsum" id="8CEJ"/>
<dbReference type="PDBsum" id="8CEK"/>
<dbReference type="SMR" id="P38947"/>
<dbReference type="STRING" id="431943.CKL_3015"/>
<dbReference type="KEGG" id="ag:AAA92347"/>
<dbReference type="KEGG" id="ckl:CKL_3015"/>
<dbReference type="eggNOG" id="COG1012">
    <property type="taxonomic scope" value="Bacteria"/>
</dbReference>
<dbReference type="HOGENOM" id="CLU_028794_3_1_9"/>
<dbReference type="BioCyc" id="MetaCyc:MONOMER-13462"/>
<dbReference type="Proteomes" id="UP000002411">
    <property type="component" value="Chromosome"/>
</dbReference>
<dbReference type="GO" id="GO:0016620">
    <property type="term" value="F:oxidoreductase activity, acting on the aldehyde or oxo group of donors, NAD or NADP as acceptor"/>
    <property type="evidence" value="ECO:0007669"/>
    <property type="project" value="InterPro"/>
</dbReference>
<dbReference type="CDD" id="cd07122">
    <property type="entry name" value="ALDH_F20_ACDH"/>
    <property type="match status" value="1"/>
</dbReference>
<dbReference type="Gene3D" id="3.40.605.10">
    <property type="entry name" value="Aldehyde Dehydrogenase, Chain A, domain 1"/>
    <property type="match status" value="1"/>
</dbReference>
<dbReference type="Gene3D" id="3.40.309.10">
    <property type="entry name" value="Aldehyde Dehydrogenase, Chain A, domain 2"/>
    <property type="match status" value="1"/>
</dbReference>
<dbReference type="InterPro" id="IPR016161">
    <property type="entry name" value="Ald_DH/histidinol_DH"/>
</dbReference>
<dbReference type="InterPro" id="IPR016163">
    <property type="entry name" value="Ald_DH_C"/>
</dbReference>
<dbReference type="InterPro" id="IPR016162">
    <property type="entry name" value="Ald_DH_N"/>
</dbReference>
<dbReference type="InterPro" id="IPR015590">
    <property type="entry name" value="Aldehyde_DH_dom"/>
</dbReference>
<dbReference type="PANTHER" id="PTHR11699">
    <property type="entry name" value="ALDEHYDE DEHYDROGENASE-RELATED"/>
    <property type="match status" value="1"/>
</dbReference>
<dbReference type="Pfam" id="PF00171">
    <property type="entry name" value="Aldedh"/>
    <property type="match status" value="1"/>
</dbReference>
<dbReference type="SUPFAM" id="SSF53720">
    <property type="entry name" value="ALDH-like"/>
    <property type="match status" value="1"/>
</dbReference>